<organism>
    <name type="scientific">Streptomyces coelicolor (strain ATCC BAA-471 / A3(2) / M145)</name>
    <dbReference type="NCBI Taxonomy" id="100226"/>
    <lineage>
        <taxon>Bacteria</taxon>
        <taxon>Bacillati</taxon>
        <taxon>Actinomycetota</taxon>
        <taxon>Actinomycetes</taxon>
        <taxon>Kitasatosporales</taxon>
        <taxon>Streptomycetaceae</taxon>
        <taxon>Streptomyces</taxon>
        <taxon>Streptomyces albidoflavus group</taxon>
    </lineage>
</organism>
<keyword id="KW-0414">Isoprene biosynthesis</keyword>
<keyword id="KW-0460">Magnesium</keyword>
<keyword id="KW-0479">Metal-binding</keyword>
<keyword id="KW-1185">Reference proteome</keyword>
<keyword id="KW-0784">Thiamine biosynthesis</keyword>
<keyword id="KW-0786">Thiamine pyrophosphate</keyword>
<keyword id="KW-0808">Transferase</keyword>
<accession>Q9X7W3</accession>
<proteinExistence type="inferred from homology"/>
<gene>
    <name evidence="1" type="primary">dxs1</name>
    <name type="synonym">dxs</name>
    <name type="ordered locus">SCO6768</name>
    <name type="ORF">SC6A5.17</name>
</gene>
<name>DXS1_STRCO</name>
<sequence length="656" mass="69546">MTILENIRGPRDLKALSEAELGELSDEIRDFLVHAVARTGGHLGPNLGVVELTVALHRVFESPDDRILWDTGHQSYVHKLLTGRQDFSKLRSKGGLSGYPSREESAHDVIENSHASTVLGWADGLAKARQVQGERSHVVAVIGDGALTGGMAWEALNNIAAARDRPLIIVVNDNERSYAPTIGGLANHLATLRTTDGYERALAWGKDVLQRTPVVGHTVYEALHGAKKGFKDAFAPQGLFEDLGLKYLGPIDGHDIGAVESALRRAKRFHGPVLVHCLTEKGRGYEPALRDEEDHFHTVGVMDPLTCEPLGPAGGPSWTSVFGEEIVRIGEERADVVAITAAMLHPVGLAPFAERFPDRVWDVGIAEQHAAVSAAGLATGGLHPVVAVYATFLNRAFDQLLMDVALHRCGVTFVLDRAGVTGVDGASHNGMWDMSVLQVVPGLRIAAPRDADQLRTQLREAVAVDDAPTLLRFPKESVGPAVPAVDRIGGLDVLHTADRSEVLLVAVGVMAPVCLGAAELLEARGIGCTVVDPRWVKPVDPALAPLAARHRLVAVVEDNSRAAGVGSAVALALGDAEVDVPVRRFGIPEQFLAHAKRAEVLADIGLTPVDVAGRIAASLALAEPAGDRAGGPAVEQPGDGRMSGDGRIVMPAQGEN</sequence>
<feature type="chain" id="PRO_0000189157" description="1-deoxy-D-xylulose-5-phosphate synthase 1">
    <location>
        <begin position="1"/>
        <end position="656"/>
    </location>
</feature>
<feature type="region of interest" description="Disordered" evidence="2">
    <location>
        <begin position="625"/>
        <end position="656"/>
    </location>
</feature>
<feature type="binding site" evidence="1">
    <location>
        <position position="73"/>
    </location>
    <ligand>
        <name>thiamine diphosphate</name>
        <dbReference type="ChEBI" id="CHEBI:58937"/>
    </ligand>
</feature>
<feature type="binding site" evidence="1">
    <location>
        <begin position="113"/>
        <end position="115"/>
    </location>
    <ligand>
        <name>thiamine diphosphate</name>
        <dbReference type="ChEBI" id="CHEBI:58937"/>
    </ligand>
</feature>
<feature type="binding site" evidence="1">
    <location>
        <position position="144"/>
    </location>
    <ligand>
        <name>Mg(2+)</name>
        <dbReference type="ChEBI" id="CHEBI:18420"/>
    </ligand>
</feature>
<feature type="binding site" evidence="1">
    <location>
        <begin position="145"/>
        <end position="146"/>
    </location>
    <ligand>
        <name>thiamine diphosphate</name>
        <dbReference type="ChEBI" id="CHEBI:58937"/>
    </ligand>
</feature>
<feature type="binding site" evidence="1">
    <location>
        <position position="174"/>
    </location>
    <ligand>
        <name>Mg(2+)</name>
        <dbReference type="ChEBI" id="CHEBI:18420"/>
    </ligand>
</feature>
<feature type="binding site" evidence="1">
    <location>
        <position position="174"/>
    </location>
    <ligand>
        <name>thiamine diphosphate</name>
        <dbReference type="ChEBI" id="CHEBI:58937"/>
    </ligand>
</feature>
<feature type="binding site" evidence="1">
    <location>
        <position position="285"/>
    </location>
    <ligand>
        <name>thiamine diphosphate</name>
        <dbReference type="ChEBI" id="CHEBI:58937"/>
    </ligand>
</feature>
<feature type="binding site" evidence="1">
    <location>
        <position position="367"/>
    </location>
    <ligand>
        <name>thiamine diphosphate</name>
        <dbReference type="ChEBI" id="CHEBI:58937"/>
    </ligand>
</feature>
<evidence type="ECO:0000255" key="1">
    <source>
        <dbReference type="HAMAP-Rule" id="MF_00315"/>
    </source>
</evidence>
<evidence type="ECO:0000256" key="2">
    <source>
        <dbReference type="SAM" id="MobiDB-lite"/>
    </source>
</evidence>
<protein>
    <recommendedName>
        <fullName evidence="1">1-deoxy-D-xylulose-5-phosphate synthase 1</fullName>
        <ecNumber evidence="1">2.2.1.7</ecNumber>
    </recommendedName>
    <alternativeName>
        <fullName evidence="1">1-deoxyxylulose-5-phosphate synthase 1</fullName>
        <shortName evidence="1">DXP synthase 1</shortName>
        <shortName evidence="1">DXPS 1</shortName>
    </alternativeName>
</protein>
<dbReference type="EC" id="2.2.1.7" evidence="1"/>
<dbReference type="EMBL" id="AL939129">
    <property type="protein sequence ID" value="CAB39701.1"/>
    <property type="molecule type" value="Genomic_DNA"/>
</dbReference>
<dbReference type="PIR" id="T35408">
    <property type="entry name" value="T35408"/>
</dbReference>
<dbReference type="RefSeq" id="NP_630840.1">
    <property type="nucleotide sequence ID" value="NC_003888.3"/>
</dbReference>
<dbReference type="RefSeq" id="WP_011031168.1">
    <property type="nucleotide sequence ID" value="NZ_VNID01000002.1"/>
</dbReference>
<dbReference type="SMR" id="Q9X7W3"/>
<dbReference type="FunCoup" id="Q9X7W3">
    <property type="interactions" value="234"/>
</dbReference>
<dbReference type="STRING" id="100226.gene:17764426"/>
<dbReference type="PaxDb" id="100226-SCO6768"/>
<dbReference type="KEGG" id="sco:SCO6768"/>
<dbReference type="PATRIC" id="fig|100226.15.peg.6877"/>
<dbReference type="eggNOG" id="COG1154">
    <property type="taxonomic scope" value="Bacteria"/>
</dbReference>
<dbReference type="HOGENOM" id="CLU_009227_1_4_11"/>
<dbReference type="InParanoid" id="Q9X7W3"/>
<dbReference type="OrthoDB" id="9803371at2"/>
<dbReference type="PhylomeDB" id="Q9X7W3"/>
<dbReference type="UniPathway" id="UPA00064">
    <property type="reaction ID" value="UER00091"/>
</dbReference>
<dbReference type="Proteomes" id="UP000001973">
    <property type="component" value="Chromosome"/>
</dbReference>
<dbReference type="GO" id="GO:0005829">
    <property type="term" value="C:cytosol"/>
    <property type="evidence" value="ECO:0000318"/>
    <property type="project" value="GO_Central"/>
</dbReference>
<dbReference type="GO" id="GO:0008661">
    <property type="term" value="F:1-deoxy-D-xylulose-5-phosphate synthase activity"/>
    <property type="evidence" value="ECO:0000318"/>
    <property type="project" value="GO_Central"/>
</dbReference>
<dbReference type="GO" id="GO:0000287">
    <property type="term" value="F:magnesium ion binding"/>
    <property type="evidence" value="ECO:0007669"/>
    <property type="project" value="UniProtKB-UniRule"/>
</dbReference>
<dbReference type="GO" id="GO:0030976">
    <property type="term" value="F:thiamine pyrophosphate binding"/>
    <property type="evidence" value="ECO:0007669"/>
    <property type="project" value="UniProtKB-UniRule"/>
</dbReference>
<dbReference type="GO" id="GO:0052865">
    <property type="term" value="P:1-deoxy-D-xylulose 5-phosphate biosynthetic process"/>
    <property type="evidence" value="ECO:0007669"/>
    <property type="project" value="UniProtKB-UniPathway"/>
</dbReference>
<dbReference type="GO" id="GO:0019288">
    <property type="term" value="P:isopentenyl diphosphate biosynthetic process, methylerythritol 4-phosphate pathway"/>
    <property type="evidence" value="ECO:0000318"/>
    <property type="project" value="GO_Central"/>
</dbReference>
<dbReference type="GO" id="GO:0016114">
    <property type="term" value="P:terpenoid biosynthetic process"/>
    <property type="evidence" value="ECO:0007669"/>
    <property type="project" value="UniProtKB-UniRule"/>
</dbReference>
<dbReference type="GO" id="GO:0009228">
    <property type="term" value="P:thiamine biosynthetic process"/>
    <property type="evidence" value="ECO:0007669"/>
    <property type="project" value="UniProtKB-UniRule"/>
</dbReference>
<dbReference type="CDD" id="cd02007">
    <property type="entry name" value="TPP_DXS"/>
    <property type="match status" value="1"/>
</dbReference>
<dbReference type="CDD" id="cd07033">
    <property type="entry name" value="TPP_PYR_DXS_TK_like"/>
    <property type="match status" value="1"/>
</dbReference>
<dbReference type="FunFam" id="3.40.50.920:FF:000002">
    <property type="entry name" value="1-deoxy-D-xylulose-5-phosphate synthase"/>
    <property type="match status" value="1"/>
</dbReference>
<dbReference type="FunFam" id="3.40.50.970:FF:000005">
    <property type="entry name" value="1-deoxy-D-xylulose-5-phosphate synthase"/>
    <property type="match status" value="1"/>
</dbReference>
<dbReference type="Gene3D" id="3.40.50.920">
    <property type="match status" value="1"/>
</dbReference>
<dbReference type="Gene3D" id="3.40.50.970">
    <property type="match status" value="2"/>
</dbReference>
<dbReference type="HAMAP" id="MF_00315">
    <property type="entry name" value="DXP_synth"/>
    <property type="match status" value="1"/>
</dbReference>
<dbReference type="InterPro" id="IPR005477">
    <property type="entry name" value="Dxylulose-5-P_synthase"/>
</dbReference>
<dbReference type="InterPro" id="IPR029061">
    <property type="entry name" value="THDP-binding"/>
</dbReference>
<dbReference type="InterPro" id="IPR009014">
    <property type="entry name" value="Transketo_C/PFOR_II"/>
</dbReference>
<dbReference type="InterPro" id="IPR005475">
    <property type="entry name" value="Transketolase-like_Pyr-bd"/>
</dbReference>
<dbReference type="InterPro" id="IPR020826">
    <property type="entry name" value="Transketolase_BS"/>
</dbReference>
<dbReference type="InterPro" id="IPR033248">
    <property type="entry name" value="Transketolase_C"/>
</dbReference>
<dbReference type="InterPro" id="IPR049557">
    <property type="entry name" value="Transketolase_CS"/>
</dbReference>
<dbReference type="NCBIfam" id="TIGR00204">
    <property type="entry name" value="dxs"/>
    <property type="match status" value="1"/>
</dbReference>
<dbReference type="NCBIfam" id="NF003933">
    <property type="entry name" value="PRK05444.2-2"/>
    <property type="match status" value="1"/>
</dbReference>
<dbReference type="PANTHER" id="PTHR43322">
    <property type="entry name" value="1-D-DEOXYXYLULOSE 5-PHOSPHATE SYNTHASE-RELATED"/>
    <property type="match status" value="1"/>
</dbReference>
<dbReference type="PANTHER" id="PTHR43322:SF5">
    <property type="entry name" value="1-DEOXY-D-XYLULOSE-5-PHOSPHATE SYNTHASE, CHLOROPLASTIC"/>
    <property type="match status" value="1"/>
</dbReference>
<dbReference type="Pfam" id="PF13292">
    <property type="entry name" value="DXP_synthase_N"/>
    <property type="match status" value="1"/>
</dbReference>
<dbReference type="Pfam" id="PF02779">
    <property type="entry name" value="Transket_pyr"/>
    <property type="match status" value="1"/>
</dbReference>
<dbReference type="Pfam" id="PF02780">
    <property type="entry name" value="Transketolase_C"/>
    <property type="match status" value="1"/>
</dbReference>
<dbReference type="SMART" id="SM00861">
    <property type="entry name" value="Transket_pyr"/>
    <property type="match status" value="1"/>
</dbReference>
<dbReference type="SUPFAM" id="SSF52518">
    <property type="entry name" value="Thiamin diphosphate-binding fold (THDP-binding)"/>
    <property type="match status" value="2"/>
</dbReference>
<dbReference type="SUPFAM" id="SSF52922">
    <property type="entry name" value="TK C-terminal domain-like"/>
    <property type="match status" value="1"/>
</dbReference>
<dbReference type="PROSITE" id="PS00801">
    <property type="entry name" value="TRANSKETOLASE_1"/>
    <property type="match status" value="1"/>
</dbReference>
<dbReference type="PROSITE" id="PS00802">
    <property type="entry name" value="TRANSKETOLASE_2"/>
    <property type="match status" value="1"/>
</dbReference>
<reference key="1">
    <citation type="journal article" date="2002" name="Nature">
        <title>Complete genome sequence of the model actinomycete Streptomyces coelicolor A3(2).</title>
        <authorList>
            <person name="Bentley S.D."/>
            <person name="Chater K.F."/>
            <person name="Cerdeno-Tarraga A.-M."/>
            <person name="Challis G.L."/>
            <person name="Thomson N.R."/>
            <person name="James K.D."/>
            <person name="Harris D.E."/>
            <person name="Quail M.A."/>
            <person name="Kieser H."/>
            <person name="Harper D."/>
            <person name="Bateman A."/>
            <person name="Brown S."/>
            <person name="Chandra G."/>
            <person name="Chen C.W."/>
            <person name="Collins M."/>
            <person name="Cronin A."/>
            <person name="Fraser A."/>
            <person name="Goble A."/>
            <person name="Hidalgo J."/>
            <person name="Hornsby T."/>
            <person name="Howarth S."/>
            <person name="Huang C.-H."/>
            <person name="Kieser T."/>
            <person name="Larke L."/>
            <person name="Murphy L.D."/>
            <person name="Oliver K."/>
            <person name="O'Neil S."/>
            <person name="Rabbinowitsch E."/>
            <person name="Rajandream M.A."/>
            <person name="Rutherford K.M."/>
            <person name="Rutter S."/>
            <person name="Seeger K."/>
            <person name="Saunders D."/>
            <person name="Sharp S."/>
            <person name="Squares R."/>
            <person name="Squares S."/>
            <person name="Taylor K."/>
            <person name="Warren T."/>
            <person name="Wietzorrek A."/>
            <person name="Woodward J.R."/>
            <person name="Barrell B.G."/>
            <person name="Parkhill J."/>
            <person name="Hopwood D.A."/>
        </authorList>
    </citation>
    <scope>NUCLEOTIDE SEQUENCE [LARGE SCALE GENOMIC DNA]</scope>
    <source>
        <strain>ATCC BAA-471 / A3(2) / M145</strain>
    </source>
</reference>
<comment type="function">
    <text evidence="1">Catalyzes the acyloin condensation reaction between C atoms 2 and 3 of pyruvate and glyceraldehyde 3-phosphate to yield 1-deoxy-D-xylulose-5-phosphate (DXP).</text>
</comment>
<comment type="catalytic activity">
    <reaction evidence="1">
        <text>D-glyceraldehyde 3-phosphate + pyruvate + H(+) = 1-deoxy-D-xylulose 5-phosphate + CO2</text>
        <dbReference type="Rhea" id="RHEA:12605"/>
        <dbReference type="ChEBI" id="CHEBI:15361"/>
        <dbReference type="ChEBI" id="CHEBI:15378"/>
        <dbReference type="ChEBI" id="CHEBI:16526"/>
        <dbReference type="ChEBI" id="CHEBI:57792"/>
        <dbReference type="ChEBI" id="CHEBI:59776"/>
        <dbReference type="EC" id="2.2.1.7"/>
    </reaction>
</comment>
<comment type="cofactor">
    <cofactor evidence="1">
        <name>Mg(2+)</name>
        <dbReference type="ChEBI" id="CHEBI:18420"/>
    </cofactor>
    <text evidence="1">Binds 1 Mg(2+) ion per subunit.</text>
</comment>
<comment type="cofactor">
    <cofactor evidence="1">
        <name>thiamine diphosphate</name>
        <dbReference type="ChEBI" id="CHEBI:58937"/>
    </cofactor>
    <text evidence="1">Binds 1 thiamine pyrophosphate per subunit.</text>
</comment>
<comment type="pathway">
    <text evidence="1">Metabolic intermediate biosynthesis; 1-deoxy-D-xylulose 5-phosphate biosynthesis; 1-deoxy-D-xylulose 5-phosphate from D-glyceraldehyde 3-phosphate and pyruvate: step 1/1.</text>
</comment>
<comment type="subunit">
    <text evidence="1">Homodimer.</text>
</comment>
<comment type="similarity">
    <text evidence="1">Belongs to the transketolase family. DXPS subfamily.</text>
</comment>